<keyword id="KW-0027">Amidation</keyword>
<keyword id="KW-0202">Cytokine</keyword>
<keyword id="KW-0903">Direct protein sequencing</keyword>
<keyword id="KW-1015">Disulfide bond</keyword>
<accession>P22800</accession>
<organism>
    <name type="scientific">Cotesia kariyai</name>
    <name type="common">Parasitic wasp</name>
    <dbReference type="NCBI Taxonomy" id="178385"/>
    <lineage>
        <taxon>Eukaryota</taxon>
        <taxon>Metazoa</taxon>
        <taxon>Ecdysozoa</taxon>
        <taxon>Arthropoda</taxon>
        <taxon>Hexapoda</taxon>
        <taxon>Insecta</taxon>
        <taxon>Pterygota</taxon>
        <taxon>Neoptera</taxon>
        <taxon>Endopterygota</taxon>
        <taxon>Hymenoptera</taxon>
        <taxon>Apocrita</taxon>
        <taxon>Ichneumonoidea</taxon>
        <taxon>Braconidae</taxon>
        <taxon>Microgastrinae</taxon>
        <taxon>Cotesia</taxon>
    </lineage>
</organism>
<protein>
    <recommendedName>
        <fullName>Growth-blocking peptide</fullName>
        <shortName>GBP</shortName>
    </recommendedName>
    <alternativeName>
        <fullName>Juvenile hormone esterase activity repressive peptide</fullName>
    </alternativeName>
</protein>
<comment type="function">
    <text>Biogenic peptide that prevents, in lepidopteran, the onset of metamorphosis from larva to pupa. This growth-blocking peptide has repressive activity against juvenile hormone esterase.</text>
</comment>
<comment type="tissue specificity">
    <text>Hemolymph.</text>
</comment>
<comment type="similarity">
    <text evidence="2">Belongs to the GBP/PSP1/paralytic peptide family.</text>
</comment>
<sequence length="25" mass="2785">ENFSGGCVAGYMRTPDGRCKPTFYQ</sequence>
<proteinExistence type="evidence at protein level"/>
<reference key="1">
    <citation type="journal article" date="1991" name="J. Biol. Chem.">
        <title>Structure of a growth-blocking peptide present in parasitized insect hemolymph.</title>
        <authorList>
            <person name="Hayakawa Y."/>
        </authorList>
    </citation>
    <scope>PROTEIN SEQUENCE</scope>
    <scope>AMIDATION AT GLN-25</scope>
</reference>
<feature type="peptide" id="PRO_0000043907" description="Growth-blocking peptide">
    <location>
        <begin position="1"/>
        <end position="25"/>
    </location>
</feature>
<feature type="modified residue" description="Glutamine amide" evidence="1">
    <location>
        <position position="25"/>
    </location>
</feature>
<feature type="disulfide bond">
    <location>
        <begin position="7"/>
        <end position="19"/>
    </location>
</feature>
<evidence type="ECO:0000269" key="1">
    <source>
    </source>
</evidence>
<evidence type="ECO:0000305" key="2"/>
<name>GBP_COTKA</name>
<dbReference type="SMR" id="P22800"/>
<dbReference type="GO" id="GO:0005615">
    <property type="term" value="C:extracellular space"/>
    <property type="evidence" value="ECO:0007669"/>
    <property type="project" value="UniProtKB-KW"/>
</dbReference>
<dbReference type="GO" id="GO:0005125">
    <property type="term" value="F:cytokine activity"/>
    <property type="evidence" value="ECO:0007669"/>
    <property type="project" value="UniProtKB-KW"/>
</dbReference>
<dbReference type="InterPro" id="IPR003463">
    <property type="entry name" value="GBP_PSP"/>
</dbReference>
<dbReference type="Pfam" id="PF02425">
    <property type="entry name" value="GBP_PSP"/>
    <property type="match status" value="1"/>
</dbReference>